<reference key="1">
    <citation type="journal article" date="1989" name="Nucleic Acids Res.">
        <title>Nucleotide sequence of human preprocathepsin H, a lysosomal cysteine proteinase.</title>
        <authorList>
            <person name="Fuchs R."/>
            <person name="Gassen H.G."/>
        </authorList>
    </citation>
    <scope>NUCLEOTIDE SEQUENCE [MRNA]</scope>
    <scope>VARIANTS SER-26 AND TYR-179</scope>
    <source>
        <tissue>Liver</tissue>
    </source>
</reference>
<reference key="2">
    <citation type="journal article" date="2002" name="J. Biol. Chem.">
        <title>Analysis of a truncated form of cathepsin H in human prostate tumor cells.</title>
        <authorList>
            <person name="Waghray A."/>
            <person name="Keppler D."/>
            <person name="Sloane B.F."/>
            <person name="Schuger L."/>
            <person name="Chen Y.Q."/>
        </authorList>
    </citation>
    <scope>NUCLEOTIDE SEQUENCE [MRNA]</scope>
    <scope>VARIANT TYR-179</scope>
</reference>
<reference key="3">
    <citation type="journal article" date="2004" name="Nat. Genet.">
        <title>Complete sequencing and characterization of 21,243 full-length human cDNAs.</title>
        <authorList>
            <person name="Ota T."/>
            <person name="Suzuki Y."/>
            <person name="Nishikawa T."/>
            <person name="Otsuki T."/>
            <person name="Sugiyama T."/>
            <person name="Irie R."/>
            <person name="Wakamatsu A."/>
            <person name="Hayashi K."/>
            <person name="Sato H."/>
            <person name="Nagai K."/>
            <person name="Kimura K."/>
            <person name="Makita H."/>
            <person name="Sekine M."/>
            <person name="Obayashi M."/>
            <person name="Nishi T."/>
            <person name="Shibahara T."/>
            <person name="Tanaka T."/>
            <person name="Ishii S."/>
            <person name="Yamamoto J."/>
            <person name="Saito K."/>
            <person name="Kawai Y."/>
            <person name="Isono Y."/>
            <person name="Nakamura Y."/>
            <person name="Nagahari K."/>
            <person name="Murakami K."/>
            <person name="Yasuda T."/>
            <person name="Iwayanagi T."/>
            <person name="Wagatsuma M."/>
            <person name="Shiratori A."/>
            <person name="Sudo H."/>
            <person name="Hosoiri T."/>
            <person name="Kaku Y."/>
            <person name="Kodaira H."/>
            <person name="Kondo H."/>
            <person name="Sugawara M."/>
            <person name="Takahashi M."/>
            <person name="Kanda K."/>
            <person name="Yokoi T."/>
            <person name="Furuya T."/>
            <person name="Kikkawa E."/>
            <person name="Omura Y."/>
            <person name="Abe K."/>
            <person name="Kamihara K."/>
            <person name="Katsuta N."/>
            <person name="Sato K."/>
            <person name="Tanikawa M."/>
            <person name="Yamazaki M."/>
            <person name="Ninomiya K."/>
            <person name="Ishibashi T."/>
            <person name="Yamashita H."/>
            <person name="Murakawa K."/>
            <person name="Fujimori K."/>
            <person name="Tanai H."/>
            <person name="Kimata M."/>
            <person name="Watanabe M."/>
            <person name="Hiraoka S."/>
            <person name="Chiba Y."/>
            <person name="Ishida S."/>
            <person name="Ono Y."/>
            <person name="Takiguchi S."/>
            <person name="Watanabe S."/>
            <person name="Yosida M."/>
            <person name="Hotuta T."/>
            <person name="Kusano J."/>
            <person name="Kanehori K."/>
            <person name="Takahashi-Fujii A."/>
            <person name="Hara H."/>
            <person name="Tanase T.-O."/>
            <person name="Nomura Y."/>
            <person name="Togiya S."/>
            <person name="Komai F."/>
            <person name="Hara R."/>
            <person name="Takeuchi K."/>
            <person name="Arita M."/>
            <person name="Imose N."/>
            <person name="Musashino K."/>
            <person name="Yuuki H."/>
            <person name="Oshima A."/>
            <person name="Sasaki N."/>
            <person name="Aotsuka S."/>
            <person name="Yoshikawa Y."/>
            <person name="Matsunawa H."/>
            <person name="Ichihara T."/>
            <person name="Shiohata N."/>
            <person name="Sano S."/>
            <person name="Moriya S."/>
            <person name="Momiyama H."/>
            <person name="Satoh N."/>
            <person name="Takami S."/>
            <person name="Terashima Y."/>
            <person name="Suzuki O."/>
            <person name="Nakagawa S."/>
            <person name="Senoh A."/>
            <person name="Mizoguchi H."/>
            <person name="Goto Y."/>
            <person name="Shimizu F."/>
            <person name="Wakebe H."/>
            <person name="Hishigaki H."/>
            <person name="Watanabe T."/>
            <person name="Sugiyama A."/>
            <person name="Takemoto M."/>
            <person name="Kawakami B."/>
            <person name="Yamazaki M."/>
            <person name="Watanabe K."/>
            <person name="Kumagai A."/>
            <person name="Itakura S."/>
            <person name="Fukuzumi Y."/>
            <person name="Fujimori Y."/>
            <person name="Komiyama M."/>
            <person name="Tashiro H."/>
            <person name="Tanigami A."/>
            <person name="Fujiwara T."/>
            <person name="Ono T."/>
            <person name="Yamada K."/>
            <person name="Fujii Y."/>
            <person name="Ozaki K."/>
            <person name="Hirao M."/>
            <person name="Ohmori Y."/>
            <person name="Kawabata A."/>
            <person name="Hikiji T."/>
            <person name="Kobatake N."/>
            <person name="Inagaki H."/>
            <person name="Ikema Y."/>
            <person name="Okamoto S."/>
            <person name="Okitani R."/>
            <person name="Kawakami T."/>
            <person name="Noguchi S."/>
            <person name="Itoh T."/>
            <person name="Shigeta K."/>
            <person name="Senba T."/>
            <person name="Matsumura K."/>
            <person name="Nakajima Y."/>
            <person name="Mizuno T."/>
            <person name="Morinaga M."/>
            <person name="Sasaki M."/>
            <person name="Togashi T."/>
            <person name="Oyama M."/>
            <person name="Hata H."/>
            <person name="Watanabe M."/>
            <person name="Komatsu T."/>
            <person name="Mizushima-Sugano J."/>
            <person name="Satoh T."/>
            <person name="Shirai Y."/>
            <person name="Takahashi Y."/>
            <person name="Nakagawa K."/>
            <person name="Okumura K."/>
            <person name="Nagase T."/>
            <person name="Nomura N."/>
            <person name="Kikuchi H."/>
            <person name="Masuho Y."/>
            <person name="Yamashita R."/>
            <person name="Nakai K."/>
            <person name="Yada T."/>
            <person name="Nakamura Y."/>
            <person name="Ohara O."/>
            <person name="Isogai T."/>
            <person name="Sugano S."/>
        </authorList>
    </citation>
    <scope>NUCLEOTIDE SEQUENCE [LARGE SCALE MRNA]</scope>
    <scope>VARIANT SER-26</scope>
    <source>
        <tissue>Lung</tissue>
    </source>
</reference>
<reference key="4">
    <citation type="journal article" date="2006" name="Nature">
        <title>Analysis of the DNA sequence and duplication history of human chromosome 15.</title>
        <authorList>
            <person name="Zody M.C."/>
            <person name="Garber M."/>
            <person name="Sharpe T."/>
            <person name="Young S.K."/>
            <person name="Rowen L."/>
            <person name="O'Neill K."/>
            <person name="Whittaker C.A."/>
            <person name="Kamal M."/>
            <person name="Chang J.L."/>
            <person name="Cuomo C.A."/>
            <person name="Dewar K."/>
            <person name="FitzGerald M.G."/>
            <person name="Kodira C.D."/>
            <person name="Madan A."/>
            <person name="Qin S."/>
            <person name="Yang X."/>
            <person name="Abbasi N."/>
            <person name="Abouelleil A."/>
            <person name="Arachchi H.M."/>
            <person name="Baradarani L."/>
            <person name="Birditt B."/>
            <person name="Bloom S."/>
            <person name="Bloom T."/>
            <person name="Borowsky M.L."/>
            <person name="Burke J."/>
            <person name="Butler J."/>
            <person name="Cook A."/>
            <person name="DeArellano K."/>
            <person name="DeCaprio D."/>
            <person name="Dorris L. III"/>
            <person name="Dors M."/>
            <person name="Eichler E.E."/>
            <person name="Engels R."/>
            <person name="Fahey J."/>
            <person name="Fleetwood P."/>
            <person name="Friedman C."/>
            <person name="Gearin G."/>
            <person name="Hall J.L."/>
            <person name="Hensley G."/>
            <person name="Johnson E."/>
            <person name="Jones C."/>
            <person name="Kamat A."/>
            <person name="Kaur A."/>
            <person name="Locke D.P."/>
            <person name="Madan A."/>
            <person name="Munson G."/>
            <person name="Jaffe D.B."/>
            <person name="Lui A."/>
            <person name="Macdonald P."/>
            <person name="Mauceli E."/>
            <person name="Naylor J.W."/>
            <person name="Nesbitt R."/>
            <person name="Nicol R."/>
            <person name="O'Leary S.B."/>
            <person name="Ratcliffe A."/>
            <person name="Rounsley S."/>
            <person name="She X."/>
            <person name="Sneddon K.M.B."/>
            <person name="Stewart S."/>
            <person name="Sougnez C."/>
            <person name="Stone S.M."/>
            <person name="Topham K."/>
            <person name="Vincent D."/>
            <person name="Wang S."/>
            <person name="Zimmer A.R."/>
            <person name="Birren B.W."/>
            <person name="Hood L."/>
            <person name="Lander E.S."/>
            <person name="Nusbaum C."/>
        </authorList>
    </citation>
    <scope>NUCLEOTIDE SEQUENCE [LARGE SCALE GENOMIC DNA]</scope>
</reference>
<reference key="5">
    <citation type="journal article" date="2004" name="Genome Res.">
        <title>The status, quality, and expansion of the NIH full-length cDNA project: the Mammalian Gene Collection (MGC).</title>
        <authorList>
            <consortium name="The MGC Project Team"/>
        </authorList>
    </citation>
    <scope>NUCLEOTIDE SEQUENCE [LARGE SCALE MRNA]</scope>
    <scope>VARIANT SER-26</scope>
    <source>
        <tissue>Eye</tissue>
    </source>
</reference>
<reference key="6">
    <citation type="journal article" date="1988" name="Biol. Chem. Hoppe-Seyler">
        <title>Molecular cloning and sequencing of a cDNA coding for mature human kidney cathepsin H.</title>
        <authorList>
            <person name="Fuchs R."/>
            <person name="Machleidt W."/>
            <person name="Gassen H.G."/>
        </authorList>
    </citation>
    <scope>NUCLEOTIDE SEQUENCE [MRNA] OF 88-335</scope>
    <scope>VARIANT TYR-179</scope>
    <source>
        <tissue>Kidney</tissue>
    </source>
</reference>
<reference key="7">
    <citation type="journal article" date="1988" name="FEBS Lett.">
        <title>Amino acid sequences of the human kidney cathepsins H and L.</title>
        <authorList>
            <person name="Ritonja A."/>
            <person name="Popovic T."/>
            <person name="Kotnik M."/>
            <person name="Machleidt W."/>
            <person name="Turk V."/>
        </authorList>
    </citation>
    <scope>PROTEIN SEQUENCE OF 98-105 AND 114-335</scope>
    <scope>GLYCOSYLATION AT ASN-101 AND ASN-230</scope>
    <source>
        <tissue>Kidney</tissue>
    </source>
</reference>
<reference key="8">
    <citation type="book" date="1986" name="Cysteine proteinases and their inhibitors">
        <title>Human cathepsins B, H and L: characterization by amino acid sequences and some kinetics of inhibition by the kininogens.</title>
        <editorList>
            <person name="Turk V."/>
        </editorList>
        <authorList>
            <person name="Machleidt W."/>
            <person name="Ritonja A."/>
            <person name="Popovic T."/>
            <person name="Kotnik M."/>
            <person name="Brzin J."/>
            <person name="Turk V."/>
            <person name="Machleidt I."/>
            <person name="Mueller-Esterl W."/>
        </authorList>
    </citation>
    <scope>PROTEIN SEQUENCE OF 99-105; 116-159 AND 294-335</scope>
</reference>
<reference key="9">
    <citation type="journal article" date="2009" name="J. Proteome Res.">
        <title>Glycoproteomics analysis of human liver tissue by combination of multiple enzyme digestion and hydrazide chemistry.</title>
        <authorList>
            <person name="Chen R."/>
            <person name="Jiang X."/>
            <person name="Sun D."/>
            <person name="Han G."/>
            <person name="Wang F."/>
            <person name="Ye M."/>
            <person name="Wang L."/>
            <person name="Zou H."/>
        </authorList>
    </citation>
    <scope>GLYCOSYLATION [LARGE SCALE ANALYSIS] AT ASN-230</scope>
    <source>
        <tissue>Liver</tissue>
    </source>
</reference>
<reference key="10">
    <citation type="journal article" date="2011" name="BMC Syst. Biol.">
        <title>Initial characterization of the human central proteome.</title>
        <authorList>
            <person name="Burkard T.R."/>
            <person name="Planyavsky M."/>
            <person name="Kaupe I."/>
            <person name="Breitwieser F.P."/>
            <person name="Buerckstuemmer T."/>
            <person name="Bennett K.L."/>
            <person name="Superti-Furga G."/>
            <person name="Colinge J."/>
        </authorList>
    </citation>
    <scope>IDENTIFICATION BY MASS SPECTROMETRY [LARGE SCALE ANALYSIS]</scope>
</reference>
<reference key="11">
    <citation type="journal article" date="2014" name="J. Proteomics">
        <title>An enzyme assisted RP-RPLC approach for in-depth analysis of human liver phosphoproteome.</title>
        <authorList>
            <person name="Bian Y."/>
            <person name="Song C."/>
            <person name="Cheng K."/>
            <person name="Dong M."/>
            <person name="Wang F."/>
            <person name="Huang J."/>
            <person name="Sun D."/>
            <person name="Wang L."/>
            <person name="Ye M."/>
            <person name="Zou H."/>
        </authorList>
    </citation>
    <scope>IDENTIFICATION BY MASS SPECTROMETRY [LARGE SCALE ANALYSIS]</scope>
    <source>
        <tissue>Liver</tissue>
    </source>
</reference>
<reference key="12">
    <citation type="journal article" date="2015" name="Proteomics">
        <title>N-terminome analysis of the human mitochondrial proteome.</title>
        <authorList>
            <person name="Vaca Jacome A.S."/>
            <person name="Rabilloud T."/>
            <person name="Schaeffer-Reiss C."/>
            <person name="Rompais M."/>
            <person name="Ayoub D."/>
            <person name="Lane L."/>
            <person name="Bairoch A."/>
            <person name="Van Dorsselaer A."/>
            <person name="Carapito C."/>
        </authorList>
    </citation>
    <scope>IDENTIFICATION BY MASS SPECTROMETRY [LARGE SCALE ANALYSIS]</scope>
</reference>
<reference key="13">
    <citation type="journal article" date="2006" name="Science">
        <title>The consensus coding sequences of human breast and colorectal cancers.</title>
        <authorList>
            <person name="Sjoeblom T."/>
            <person name="Jones S."/>
            <person name="Wood L.D."/>
            <person name="Parsons D.W."/>
            <person name="Lin J."/>
            <person name="Barber T.D."/>
            <person name="Mandelker D."/>
            <person name="Leary R.J."/>
            <person name="Ptak J."/>
            <person name="Silliman N."/>
            <person name="Szabo S."/>
            <person name="Buckhaults P."/>
            <person name="Farrell C."/>
            <person name="Meeh P."/>
            <person name="Markowitz S.D."/>
            <person name="Willis J."/>
            <person name="Dawson D."/>
            <person name="Willson J.K.V."/>
            <person name="Gazdar A.F."/>
            <person name="Hartigan J."/>
            <person name="Wu L."/>
            <person name="Liu C."/>
            <person name="Parmigiani G."/>
            <person name="Park B.H."/>
            <person name="Bachman K.E."/>
            <person name="Papadopoulos N."/>
            <person name="Vogelstein B."/>
            <person name="Kinzler K.W."/>
            <person name="Velculescu V.E."/>
        </authorList>
    </citation>
    <scope>VARIANT [LARGE SCALE ANALYSIS] ARG-126</scope>
</reference>
<dbReference type="EC" id="3.4.22.16"/>
<dbReference type="EMBL" id="X16832">
    <property type="protein sequence ID" value="CAA34734.1"/>
    <property type="molecule type" value="mRNA"/>
</dbReference>
<dbReference type="EMBL" id="AF426247">
    <property type="protein sequence ID" value="AAL23961.1"/>
    <property type="molecule type" value="mRNA"/>
</dbReference>
<dbReference type="EMBL" id="AK314698">
    <property type="protein sequence ID" value="BAG37247.1"/>
    <property type="molecule type" value="mRNA"/>
</dbReference>
<dbReference type="EMBL" id="AC011944">
    <property type="status" value="NOT_ANNOTATED_CDS"/>
    <property type="molecule type" value="Genomic_DNA"/>
</dbReference>
<dbReference type="EMBL" id="BC002479">
    <property type="protein sequence ID" value="AAH02479.1"/>
    <property type="molecule type" value="mRNA"/>
</dbReference>
<dbReference type="EMBL" id="X07549">
    <property type="protein sequence ID" value="CAA30428.1"/>
    <property type="molecule type" value="mRNA"/>
</dbReference>
<dbReference type="EMBL" id="X07549">
    <property type="protein sequence ID" value="CAA30429.1"/>
    <property type="molecule type" value="mRNA"/>
</dbReference>
<dbReference type="CCDS" id="CCDS10308.1"/>
<dbReference type="PIR" id="S12486">
    <property type="entry name" value="KHHUH"/>
</dbReference>
<dbReference type="RefSeq" id="NP_004381.2">
    <property type="nucleotide sequence ID" value="NM_004390.4"/>
</dbReference>
<dbReference type="PDB" id="6CZK">
    <property type="method" value="X-ray"/>
    <property type="resolution" value="2.00 A"/>
    <property type="chains" value="A=1-335"/>
</dbReference>
<dbReference type="PDB" id="6CZS">
    <property type="method" value="X-ray"/>
    <property type="resolution" value="1.66 A"/>
    <property type="chains" value="A=1-335"/>
</dbReference>
<dbReference type="PDBsum" id="6CZK"/>
<dbReference type="PDBsum" id="6CZS"/>
<dbReference type="SMR" id="P09668"/>
<dbReference type="BioGRID" id="107892">
    <property type="interactions" value="87"/>
</dbReference>
<dbReference type="FunCoup" id="P09668">
    <property type="interactions" value="569"/>
</dbReference>
<dbReference type="IntAct" id="P09668">
    <property type="interactions" value="58"/>
</dbReference>
<dbReference type="STRING" id="9606.ENSP00000220166"/>
<dbReference type="BindingDB" id="P09668"/>
<dbReference type="ChEMBL" id="CHEMBL2225"/>
<dbReference type="DrugBank" id="DB08526">
    <property type="generic name" value="CARBOBENZYLOXY-(L)-LEUCINYL-(L)LEUCINYL METHOXYMETHYLKETONE"/>
</dbReference>
<dbReference type="DrugBank" id="DB04126">
    <property type="generic name" value="N-[1-Hydroxycarboxyethyl-Carbonyl]Leucylamino-2-Methyl-Butane"/>
</dbReference>
<dbReference type="DrugBank" id="DB02140">
    <property type="generic name" value="N1-(1-Dimethylcarbamoyl-2-Phenyl-Ethyl)-2-Oxo-N4-(2-Pyridin-2-Yl-Ethyl)-Succinamide"/>
</dbReference>
<dbReference type="DrugBank" id="DB03120">
    <property type="generic name" value="p-Toluenesulfonic acid"/>
</dbReference>
<dbReference type="GuidetoPHARMACOLOGY" id="2349"/>
<dbReference type="MEROPS" id="C01.040"/>
<dbReference type="GlyCosmos" id="P09668">
    <property type="glycosylation" value="2 sites, No reported glycans"/>
</dbReference>
<dbReference type="GlyGen" id="P09668">
    <property type="glycosylation" value="6 sites, 12 N-linked glycans (2 sites)"/>
</dbReference>
<dbReference type="iPTMnet" id="P09668"/>
<dbReference type="PhosphoSitePlus" id="P09668"/>
<dbReference type="SwissPalm" id="P09668"/>
<dbReference type="BioMuta" id="CTSH"/>
<dbReference type="DMDM" id="288558851"/>
<dbReference type="jPOST" id="P09668"/>
<dbReference type="MassIVE" id="P09668"/>
<dbReference type="PaxDb" id="9606-ENSP00000220166"/>
<dbReference type="PeptideAtlas" id="P09668"/>
<dbReference type="ProteomicsDB" id="52262"/>
<dbReference type="Pumba" id="P09668"/>
<dbReference type="Antibodypedia" id="1041">
    <property type="antibodies" value="391 antibodies from 35 providers"/>
</dbReference>
<dbReference type="DNASU" id="1512"/>
<dbReference type="Ensembl" id="ENST00000220166.10">
    <property type="protein sequence ID" value="ENSP00000220166.6"/>
    <property type="gene ID" value="ENSG00000103811.18"/>
</dbReference>
<dbReference type="GeneID" id="1512"/>
<dbReference type="KEGG" id="hsa:1512"/>
<dbReference type="MANE-Select" id="ENST00000220166.10">
    <property type="protein sequence ID" value="ENSP00000220166.6"/>
    <property type="RefSeq nucleotide sequence ID" value="NM_004390.5"/>
    <property type="RefSeq protein sequence ID" value="NP_004381.2"/>
</dbReference>
<dbReference type="UCSC" id="uc021srk.2">
    <property type="organism name" value="human"/>
</dbReference>
<dbReference type="AGR" id="HGNC:2535"/>
<dbReference type="CTD" id="1512"/>
<dbReference type="DisGeNET" id="1512"/>
<dbReference type="GeneCards" id="CTSH"/>
<dbReference type="HGNC" id="HGNC:2535">
    <property type="gene designation" value="CTSH"/>
</dbReference>
<dbReference type="HPA" id="ENSG00000103811">
    <property type="expression patterns" value="Tissue enhanced (lung)"/>
</dbReference>
<dbReference type="MalaCards" id="CTSH"/>
<dbReference type="MIM" id="116820">
    <property type="type" value="gene"/>
</dbReference>
<dbReference type="neXtProt" id="NX_P09668"/>
<dbReference type="NIAGADS" id="ENSG00000103811"/>
<dbReference type="OpenTargets" id="ENSG00000103811"/>
<dbReference type="Orphanet" id="2073">
    <property type="disease" value="Narcolepsy type 1"/>
</dbReference>
<dbReference type="PharmGKB" id="PA27033"/>
<dbReference type="VEuPathDB" id="HostDB:ENSG00000103811"/>
<dbReference type="eggNOG" id="KOG1543">
    <property type="taxonomic scope" value="Eukaryota"/>
</dbReference>
<dbReference type="GeneTree" id="ENSGT00940000160227"/>
<dbReference type="InParanoid" id="P09668"/>
<dbReference type="OMA" id="TCKFQPQ"/>
<dbReference type="OrthoDB" id="10253408at2759"/>
<dbReference type="PAN-GO" id="P09668">
    <property type="GO annotations" value="4 GO annotations based on evolutionary models"/>
</dbReference>
<dbReference type="PhylomeDB" id="P09668"/>
<dbReference type="TreeFam" id="TF328985"/>
<dbReference type="BRENDA" id="3.4.22.16">
    <property type="organism ID" value="2681"/>
</dbReference>
<dbReference type="PathwayCommons" id="P09668"/>
<dbReference type="Reactome" id="R-HSA-2132295">
    <property type="pathway name" value="MHC class II antigen presentation"/>
</dbReference>
<dbReference type="Reactome" id="R-HSA-5683826">
    <property type="pathway name" value="Surfactant metabolism"/>
</dbReference>
<dbReference type="Reactome" id="R-HSA-6798695">
    <property type="pathway name" value="Neutrophil degranulation"/>
</dbReference>
<dbReference type="SABIO-RK" id="P09668"/>
<dbReference type="SignaLink" id="P09668"/>
<dbReference type="SIGNOR" id="P09668"/>
<dbReference type="BioGRID-ORCS" id="1512">
    <property type="hits" value="25 hits in 1163 CRISPR screens"/>
</dbReference>
<dbReference type="ChiTaRS" id="CTSH">
    <property type="organism name" value="human"/>
</dbReference>
<dbReference type="GeneWiki" id="Cathepsin_H"/>
<dbReference type="GenomeRNAi" id="1512"/>
<dbReference type="Pharos" id="P09668">
    <property type="development level" value="Tchem"/>
</dbReference>
<dbReference type="PRO" id="PR:P09668"/>
<dbReference type="Proteomes" id="UP000005640">
    <property type="component" value="Chromosome 15"/>
</dbReference>
<dbReference type="RNAct" id="P09668">
    <property type="molecule type" value="protein"/>
</dbReference>
<dbReference type="Bgee" id="ENSG00000103811">
    <property type="expression patterns" value="Expressed in cranial nerve II and 201 other cell types or tissues"/>
</dbReference>
<dbReference type="ExpressionAtlas" id="P09668">
    <property type="expression patterns" value="baseline and differential"/>
</dbReference>
<dbReference type="GO" id="GO:0001669">
    <property type="term" value="C:acrosomal vesicle"/>
    <property type="evidence" value="ECO:0007669"/>
    <property type="project" value="Ensembl"/>
</dbReference>
<dbReference type="GO" id="GO:0097208">
    <property type="term" value="C:alveolar lamellar body"/>
    <property type="evidence" value="ECO:0000314"/>
    <property type="project" value="UniProtKB"/>
</dbReference>
<dbReference type="GO" id="GO:0005930">
    <property type="term" value="C:axoneme"/>
    <property type="evidence" value="ECO:0007669"/>
    <property type="project" value="Ensembl"/>
</dbReference>
<dbReference type="GO" id="GO:0062023">
    <property type="term" value="C:collagen-containing extracellular matrix"/>
    <property type="evidence" value="ECO:0007005"/>
    <property type="project" value="BHF-UCL"/>
</dbReference>
<dbReference type="GO" id="GO:0036464">
    <property type="term" value="C:cytoplasmic ribonucleoprotein granule"/>
    <property type="evidence" value="ECO:0000314"/>
    <property type="project" value="HPA"/>
</dbReference>
<dbReference type="GO" id="GO:0005829">
    <property type="term" value="C:cytosol"/>
    <property type="evidence" value="ECO:0000314"/>
    <property type="project" value="UniProtKB"/>
</dbReference>
<dbReference type="GO" id="GO:0070062">
    <property type="term" value="C:extracellular exosome"/>
    <property type="evidence" value="ECO:0007005"/>
    <property type="project" value="UniProtKB"/>
</dbReference>
<dbReference type="GO" id="GO:0005576">
    <property type="term" value="C:extracellular region"/>
    <property type="evidence" value="ECO:0000304"/>
    <property type="project" value="Reactome"/>
</dbReference>
<dbReference type="GO" id="GO:0005615">
    <property type="term" value="C:extracellular space"/>
    <property type="evidence" value="ECO:0000314"/>
    <property type="project" value="UniProtKB"/>
</dbReference>
<dbReference type="GO" id="GO:1904813">
    <property type="term" value="C:ficolin-1-rich granule lumen"/>
    <property type="evidence" value="ECO:0000304"/>
    <property type="project" value="Reactome"/>
</dbReference>
<dbReference type="GO" id="GO:0043231">
    <property type="term" value="C:intracellular membrane-bounded organelle"/>
    <property type="evidence" value="ECO:0000314"/>
    <property type="project" value="HPA"/>
</dbReference>
<dbReference type="GO" id="GO:0005764">
    <property type="term" value="C:lysosome"/>
    <property type="evidence" value="ECO:0000314"/>
    <property type="project" value="UniProtKB"/>
</dbReference>
<dbReference type="GO" id="GO:0097486">
    <property type="term" value="C:multivesicular body lumen"/>
    <property type="evidence" value="ECO:0000304"/>
    <property type="project" value="Reactome"/>
</dbReference>
<dbReference type="GO" id="GO:0001520">
    <property type="term" value="C:outer dense fiber"/>
    <property type="evidence" value="ECO:0007669"/>
    <property type="project" value="Ensembl"/>
</dbReference>
<dbReference type="GO" id="GO:0034774">
    <property type="term" value="C:secretory granule lumen"/>
    <property type="evidence" value="ECO:0000304"/>
    <property type="project" value="Reactome"/>
</dbReference>
<dbReference type="GO" id="GO:1904724">
    <property type="term" value="C:tertiary granule lumen"/>
    <property type="evidence" value="ECO:0000304"/>
    <property type="project" value="Reactome"/>
</dbReference>
<dbReference type="GO" id="GO:0004177">
    <property type="term" value="F:aminopeptidase activity"/>
    <property type="evidence" value="ECO:0000314"/>
    <property type="project" value="UniProtKB"/>
</dbReference>
<dbReference type="GO" id="GO:0008656">
    <property type="term" value="F:cysteine-type endopeptidase activator activity involved in apoptotic process"/>
    <property type="evidence" value="ECO:0000314"/>
    <property type="project" value="UniProtKB"/>
</dbReference>
<dbReference type="GO" id="GO:0004197">
    <property type="term" value="F:cysteine-type endopeptidase activity"/>
    <property type="evidence" value="ECO:0000314"/>
    <property type="project" value="BHF-UCL"/>
</dbReference>
<dbReference type="GO" id="GO:0008234">
    <property type="term" value="F:cysteine-type peptidase activity"/>
    <property type="evidence" value="ECO:0000314"/>
    <property type="project" value="UniProtKB"/>
</dbReference>
<dbReference type="GO" id="GO:0004175">
    <property type="term" value="F:endopeptidase activity"/>
    <property type="evidence" value="ECO:0000314"/>
    <property type="project" value="UniProtKB"/>
</dbReference>
<dbReference type="GO" id="GO:0030108">
    <property type="term" value="F:HLA-A specific activating MHC class I receptor activity"/>
    <property type="evidence" value="ECO:0000314"/>
    <property type="project" value="UniProtKB"/>
</dbReference>
<dbReference type="GO" id="GO:0042802">
    <property type="term" value="F:identical protein binding"/>
    <property type="evidence" value="ECO:0007669"/>
    <property type="project" value="Ensembl"/>
</dbReference>
<dbReference type="GO" id="GO:0030984">
    <property type="term" value="F:kininogen binding"/>
    <property type="evidence" value="ECO:0007669"/>
    <property type="project" value="Ensembl"/>
</dbReference>
<dbReference type="GO" id="GO:0008233">
    <property type="term" value="F:peptidase activity"/>
    <property type="evidence" value="ECO:0000314"/>
    <property type="project" value="UniProtKB"/>
</dbReference>
<dbReference type="GO" id="GO:0044877">
    <property type="term" value="F:protein-containing complex binding"/>
    <property type="evidence" value="ECO:0007669"/>
    <property type="project" value="Ensembl"/>
</dbReference>
<dbReference type="GO" id="GO:0004252">
    <property type="term" value="F:serine-type endopeptidase activity"/>
    <property type="evidence" value="ECO:0000250"/>
    <property type="project" value="UniProtKB"/>
</dbReference>
<dbReference type="GO" id="GO:0070324">
    <property type="term" value="F:thyroid hormone binding"/>
    <property type="evidence" value="ECO:0000314"/>
    <property type="project" value="UniProtKB"/>
</dbReference>
<dbReference type="GO" id="GO:0002250">
    <property type="term" value="P:adaptive immune response"/>
    <property type="evidence" value="ECO:0000270"/>
    <property type="project" value="UniProtKB"/>
</dbReference>
<dbReference type="GO" id="GO:0019882">
    <property type="term" value="P:antigen processing and presentation"/>
    <property type="evidence" value="ECO:0000304"/>
    <property type="project" value="UniProtKB"/>
</dbReference>
<dbReference type="GO" id="GO:0010815">
    <property type="term" value="P:bradykinin catabolic process"/>
    <property type="evidence" value="ECO:0000314"/>
    <property type="project" value="UniProtKB"/>
</dbReference>
<dbReference type="GO" id="GO:0097067">
    <property type="term" value="P:cellular response to thyroid hormone stimulus"/>
    <property type="evidence" value="ECO:0000270"/>
    <property type="project" value="UniProtKB"/>
</dbReference>
<dbReference type="GO" id="GO:0060448">
    <property type="term" value="P:dichotomous subdivision of terminal units involved in lung branching"/>
    <property type="evidence" value="ECO:0000250"/>
    <property type="project" value="UniProtKB"/>
</dbReference>
<dbReference type="GO" id="GO:0070371">
    <property type="term" value="P:ERK1 and ERK2 cascade"/>
    <property type="evidence" value="ECO:0000314"/>
    <property type="project" value="UniProtKB"/>
</dbReference>
<dbReference type="GO" id="GO:0006955">
    <property type="term" value="P:immune response"/>
    <property type="evidence" value="ECO:0000318"/>
    <property type="project" value="GO_Central"/>
</dbReference>
<dbReference type="GO" id="GO:0002764">
    <property type="term" value="P:immune response-regulating signaling pathway"/>
    <property type="evidence" value="ECO:0000314"/>
    <property type="project" value="UniProtKB"/>
</dbReference>
<dbReference type="GO" id="GO:1905146">
    <property type="term" value="P:lysosomal protein catabolic process"/>
    <property type="evidence" value="ECO:0000314"/>
    <property type="project" value="ARUK-UCL"/>
</dbReference>
<dbReference type="GO" id="GO:0033619">
    <property type="term" value="P:membrane protein proteolysis"/>
    <property type="evidence" value="ECO:0000314"/>
    <property type="project" value="UniProtKB"/>
</dbReference>
<dbReference type="GO" id="GO:0001656">
    <property type="term" value="P:metanephros development"/>
    <property type="evidence" value="ECO:0000250"/>
    <property type="project" value="UniProtKB"/>
</dbReference>
<dbReference type="GO" id="GO:0010813">
    <property type="term" value="P:neuropeptide catabolic process"/>
    <property type="evidence" value="ECO:0000314"/>
    <property type="project" value="UniProtKB"/>
</dbReference>
<dbReference type="GO" id="GO:2001235">
    <property type="term" value="P:positive regulation of apoptotic signaling pathway"/>
    <property type="evidence" value="ECO:0000318"/>
    <property type="project" value="GO_Central"/>
</dbReference>
<dbReference type="GO" id="GO:0030335">
    <property type="term" value="P:positive regulation of cell migration"/>
    <property type="evidence" value="ECO:0000314"/>
    <property type="project" value="UniProtKB"/>
</dbReference>
<dbReference type="GO" id="GO:0010634">
    <property type="term" value="P:positive regulation of epithelial cell migration"/>
    <property type="evidence" value="ECO:0000250"/>
    <property type="project" value="UniProtKB"/>
</dbReference>
<dbReference type="GO" id="GO:0010628">
    <property type="term" value="P:positive regulation of gene expression"/>
    <property type="evidence" value="ECO:0000314"/>
    <property type="project" value="UniProtKB"/>
</dbReference>
<dbReference type="GO" id="GO:0031648">
    <property type="term" value="P:protein destabilization"/>
    <property type="evidence" value="ECO:0000315"/>
    <property type="project" value="UniProtKB"/>
</dbReference>
<dbReference type="GO" id="GO:0006508">
    <property type="term" value="P:proteolysis"/>
    <property type="evidence" value="ECO:0000314"/>
    <property type="project" value="UniProtKB"/>
</dbReference>
<dbReference type="GO" id="GO:0051603">
    <property type="term" value="P:proteolysis involved in protein catabolic process"/>
    <property type="evidence" value="ECO:0000318"/>
    <property type="project" value="GO_Central"/>
</dbReference>
<dbReference type="GO" id="GO:1990834">
    <property type="term" value="P:response to odorant"/>
    <property type="evidence" value="ECO:0007669"/>
    <property type="project" value="Ensembl"/>
</dbReference>
<dbReference type="GO" id="GO:0032526">
    <property type="term" value="P:response to retinoic acid"/>
    <property type="evidence" value="ECO:0000250"/>
    <property type="project" value="UniProtKB"/>
</dbReference>
<dbReference type="GO" id="GO:0007283">
    <property type="term" value="P:spermatogenesis"/>
    <property type="evidence" value="ECO:0007669"/>
    <property type="project" value="Ensembl"/>
</dbReference>
<dbReference type="GO" id="GO:0043129">
    <property type="term" value="P:surfactant homeostasis"/>
    <property type="evidence" value="ECO:0000314"/>
    <property type="project" value="UniProtKB"/>
</dbReference>
<dbReference type="GO" id="GO:0001913">
    <property type="term" value="P:T cell mediated cytotoxicity"/>
    <property type="evidence" value="ECO:0000250"/>
    <property type="project" value="UniProtKB"/>
</dbReference>
<dbReference type="GO" id="GO:0031638">
    <property type="term" value="P:zymogen activation"/>
    <property type="evidence" value="ECO:0000314"/>
    <property type="project" value="UniProtKB"/>
</dbReference>
<dbReference type="CDD" id="cd02248">
    <property type="entry name" value="Peptidase_C1A"/>
    <property type="match status" value="1"/>
</dbReference>
<dbReference type="FunFam" id="3.90.70.10:FF:000074">
    <property type="entry name" value="Pro-cathepsin H"/>
    <property type="match status" value="1"/>
</dbReference>
<dbReference type="Gene3D" id="3.90.70.10">
    <property type="entry name" value="Cysteine proteinases"/>
    <property type="match status" value="1"/>
</dbReference>
<dbReference type="InterPro" id="IPR038765">
    <property type="entry name" value="Papain-like_cys_pep_sf"/>
</dbReference>
<dbReference type="InterPro" id="IPR025661">
    <property type="entry name" value="Pept_asp_AS"/>
</dbReference>
<dbReference type="InterPro" id="IPR000169">
    <property type="entry name" value="Pept_cys_AS"/>
</dbReference>
<dbReference type="InterPro" id="IPR025660">
    <property type="entry name" value="Pept_his_AS"/>
</dbReference>
<dbReference type="InterPro" id="IPR013128">
    <property type="entry name" value="Peptidase_C1A"/>
</dbReference>
<dbReference type="InterPro" id="IPR000668">
    <property type="entry name" value="Peptidase_C1A_C"/>
</dbReference>
<dbReference type="InterPro" id="IPR039417">
    <property type="entry name" value="Peptidase_C1A_papain-like"/>
</dbReference>
<dbReference type="InterPro" id="IPR013201">
    <property type="entry name" value="Prot_inhib_I29"/>
</dbReference>
<dbReference type="PANTHER" id="PTHR12411">
    <property type="entry name" value="CYSTEINE PROTEASE FAMILY C1-RELATED"/>
    <property type="match status" value="1"/>
</dbReference>
<dbReference type="Pfam" id="PF08246">
    <property type="entry name" value="Inhibitor_I29"/>
    <property type="match status" value="1"/>
</dbReference>
<dbReference type="Pfam" id="PF00112">
    <property type="entry name" value="Peptidase_C1"/>
    <property type="match status" value="1"/>
</dbReference>
<dbReference type="PRINTS" id="PR00705">
    <property type="entry name" value="PAPAIN"/>
</dbReference>
<dbReference type="SMART" id="SM00848">
    <property type="entry name" value="Inhibitor_I29"/>
    <property type="match status" value="1"/>
</dbReference>
<dbReference type="SMART" id="SM00645">
    <property type="entry name" value="Pept_C1"/>
    <property type="match status" value="1"/>
</dbReference>
<dbReference type="SUPFAM" id="SSF54001">
    <property type="entry name" value="Cysteine proteinases"/>
    <property type="match status" value="1"/>
</dbReference>
<dbReference type="PROSITE" id="PS00640">
    <property type="entry name" value="THIOL_PROTEASE_ASN"/>
    <property type="match status" value="1"/>
</dbReference>
<dbReference type="PROSITE" id="PS00139">
    <property type="entry name" value="THIOL_PROTEASE_CYS"/>
    <property type="match status" value="1"/>
</dbReference>
<dbReference type="PROSITE" id="PS00639">
    <property type="entry name" value="THIOL_PROTEASE_HIS"/>
    <property type="match status" value="1"/>
</dbReference>
<evidence type="ECO:0000250" key="1"/>
<evidence type="ECO:0000255" key="2">
    <source>
        <dbReference type="PROSITE-ProRule" id="PRU10088"/>
    </source>
</evidence>
<evidence type="ECO:0000255" key="3">
    <source>
        <dbReference type="PROSITE-ProRule" id="PRU10089"/>
    </source>
</evidence>
<evidence type="ECO:0000255" key="4">
    <source>
        <dbReference type="PROSITE-ProRule" id="PRU10090"/>
    </source>
</evidence>
<evidence type="ECO:0000269" key="5">
    <source>
    </source>
</evidence>
<evidence type="ECO:0000269" key="6">
    <source>
    </source>
</evidence>
<evidence type="ECO:0000269" key="7">
    <source>
    </source>
</evidence>
<evidence type="ECO:0000269" key="8">
    <source>
    </source>
</evidence>
<evidence type="ECO:0000269" key="9">
    <source>
    </source>
</evidence>
<evidence type="ECO:0000269" key="10">
    <source>
    </source>
</evidence>
<evidence type="ECO:0000269" key="11">
    <source>
    </source>
</evidence>
<evidence type="ECO:0000269" key="12">
    <source>
    </source>
</evidence>
<evidence type="ECO:0000269" key="13">
    <source ref="8"/>
</evidence>
<evidence type="ECO:0000305" key="14"/>
<evidence type="ECO:0007829" key="15">
    <source>
        <dbReference type="PDB" id="6CZS"/>
    </source>
</evidence>
<organism>
    <name type="scientific">Homo sapiens</name>
    <name type="common">Human</name>
    <dbReference type="NCBI Taxonomy" id="9606"/>
    <lineage>
        <taxon>Eukaryota</taxon>
        <taxon>Metazoa</taxon>
        <taxon>Chordata</taxon>
        <taxon>Craniata</taxon>
        <taxon>Vertebrata</taxon>
        <taxon>Euteleostomi</taxon>
        <taxon>Mammalia</taxon>
        <taxon>Eutheria</taxon>
        <taxon>Euarchontoglires</taxon>
        <taxon>Primates</taxon>
        <taxon>Haplorrhini</taxon>
        <taxon>Catarrhini</taxon>
        <taxon>Hominidae</taxon>
        <taxon>Homo</taxon>
    </lineage>
</organism>
<protein>
    <recommendedName>
        <fullName>Pro-cathepsin H</fullName>
    </recommendedName>
    <component>
        <recommendedName>
            <fullName>Cathepsin H mini chain</fullName>
        </recommendedName>
    </component>
    <component>
        <recommendedName>
            <fullName>Cathepsin H</fullName>
            <ecNumber>3.4.22.16</ecNumber>
        </recommendedName>
    </component>
    <component>
        <recommendedName>
            <fullName>Cathepsin H heavy chain</fullName>
        </recommendedName>
    </component>
    <component>
        <recommendedName>
            <fullName>Cathepsin H light chain</fullName>
        </recommendedName>
    </component>
</protein>
<proteinExistence type="evidence at protein level"/>
<sequence length="335" mass="37394">MWATLPLLCAGAWLLGVPVCGAAELCVNSLEKFHFKSWMSKHRKTYSTEEYHHRLQTFASNWRKINAHNNGNHTFKMALNQFSDMSFAEIKHKYLWSEPQNCSATKSNYLRGTGPYPPSVDWRKKGNFVSPVKNQGACGSCWTFSTTGALESAIAIATGKMLSLAEQQLVDCAQDFNNHGCQGGLPSQAFEYILYNKGIMGEDTYPYQGKDGYCKFQPGKAIGFVKDVANITIYDEEAMVEAVALYNPVSFAFEVTQDFMMYRTGIYSSTSCHKTPDKVNHAVLAVGYGEKNGIPYWIVKNSWGPQWGMNGYFLIERGKNMCGLAACASYPIPLV</sequence>
<name>CATH_HUMAN</name>
<comment type="function">
    <text>Important for the overall degradation of proteins in lysosomes.</text>
</comment>
<comment type="catalytic activity">
    <reaction>
        <text>Hydrolysis of proteins, acting as an aminopeptidase (notably, cleaving Arg-|-Xaa bonds) as well as an endopeptidase.</text>
        <dbReference type="EC" id="3.4.22.16"/>
    </reaction>
</comment>
<comment type="subunit">
    <text>Composed of a mini chain and a large chain. The large chain may be split into heavy and light chain. All chains are held together by disulfide bonds.</text>
</comment>
<comment type="interaction">
    <interactant intactId="EBI-6189940">
        <id>P09668</id>
    </interactant>
    <interactant intactId="EBI-11954292">
        <id>Q86V38</id>
        <label>ATN1</label>
    </interactant>
    <organismsDiffer>false</organismsDiffer>
    <experiments>3</experiments>
</comment>
<comment type="interaction">
    <interactant intactId="EBI-6189940">
        <id>P09668</id>
    </interactant>
    <interactant intactId="EBI-356015">
        <id>Q14204</id>
        <label>DYNC1H1</label>
    </interactant>
    <organismsDiffer>false</organismsDiffer>
    <experiments>3</experiments>
</comment>
<comment type="interaction">
    <interactant intactId="EBI-6189940">
        <id>P09668</id>
    </interactant>
    <interactant intactId="EBI-2432309">
        <id>Q92876</id>
        <label>KLK6</label>
    </interactant>
    <organismsDiffer>false</organismsDiffer>
    <experiments>3</experiments>
</comment>
<comment type="subcellular location">
    <subcellularLocation>
        <location>Lysosome</location>
    </subcellularLocation>
</comment>
<comment type="similarity">
    <text evidence="2 3 4">Belongs to the peptidase C1 family.</text>
</comment>
<comment type="online information" name="Atlas of Genetics and Cytogenetics in Oncology and Haematology">
    <link uri="https://atlasgeneticsoncology.org/gene/40206/CTSH"/>
</comment>
<accession>P09668</accession>
<accession>B2RBK0</accession>
<accession>Q96NY6</accession>
<accession>Q9BUM7</accession>
<keyword id="KW-0002">3D-structure</keyword>
<keyword id="KW-0903">Direct protein sequencing</keyword>
<keyword id="KW-1015">Disulfide bond</keyword>
<keyword id="KW-0325">Glycoprotein</keyword>
<keyword id="KW-0378">Hydrolase</keyword>
<keyword id="KW-0458">Lysosome</keyword>
<keyword id="KW-0645">Protease</keyword>
<keyword id="KW-1267">Proteomics identification</keyword>
<keyword id="KW-1185">Reference proteome</keyword>
<keyword id="KW-0732">Signal</keyword>
<keyword id="KW-0788">Thiol protease</keyword>
<keyword id="KW-0865">Zymogen</keyword>
<gene>
    <name type="primary">CTSH</name>
    <name type="synonym">CPSB</name>
</gene>
<feature type="signal peptide">
    <location>
        <begin position="1"/>
        <end position="22"/>
    </location>
</feature>
<feature type="propeptide" id="PRO_0000026206" description="Activation peptide" evidence="12">
    <location>
        <begin position="23"/>
        <end position="97"/>
    </location>
</feature>
<feature type="peptide" id="PRO_0000026207" description="Cathepsin H mini chain">
    <location>
        <begin position="98"/>
        <end position="105"/>
    </location>
</feature>
<feature type="propeptide" id="PRO_0000026208" evidence="13">
    <location>
        <begin position="106"/>
        <end position="115"/>
    </location>
</feature>
<feature type="chain" id="PRO_0000026209" description="Cathepsin H">
    <location>
        <begin position="116"/>
        <end position="335"/>
    </location>
</feature>
<feature type="chain" id="PRO_0000026210" description="Cathepsin H heavy chain">
    <location>
        <begin position="116"/>
        <end position="292"/>
    </location>
</feature>
<feature type="chain" id="PRO_0000026211" description="Cathepsin H light chain">
    <location>
        <begin position="293"/>
        <end position="335"/>
    </location>
</feature>
<feature type="active site" evidence="1">
    <location>
        <position position="141"/>
    </location>
</feature>
<feature type="active site" evidence="1">
    <location>
        <position position="281"/>
    </location>
</feature>
<feature type="active site" evidence="1">
    <location>
        <position position="301"/>
    </location>
</feature>
<feature type="glycosylation site" description="N-linked (GlcNAc...) asparagine" evidence="12">
    <location>
        <position position="101"/>
    </location>
</feature>
<feature type="glycosylation site" description="N-linked (GlcNAc...) asparagine" evidence="9 12">
    <location>
        <position position="230"/>
    </location>
</feature>
<feature type="disulfide bond" evidence="1">
    <location>
        <begin position="102"/>
        <end position="327"/>
    </location>
</feature>
<feature type="disulfide bond" evidence="1">
    <location>
        <begin position="138"/>
        <end position="181"/>
    </location>
</feature>
<feature type="disulfide bond" evidence="1">
    <location>
        <begin position="172"/>
        <end position="214"/>
    </location>
</feature>
<feature type="disulfide bond" evidence="1">
    <location>
        <begin position="272"/>
        <end position="322"/>
    </location>
</feature>
<feature type="sequence variant" id="VAR_057038" description="In dbSNP:rs2289702.">
    <original>G</original>
    <variation>R</variation>
    <location>
        <position position="11"/>
    </location>
</feature>
<feature type="sequence variant" id="VAR_057039" description="In dbSNP:rs35001431.">
    <original>A</original>
    <variation>T</variation>
    <location>
        <position position="23"/>
    </location>
</feature>
<feature type="sequence variant" id="VAR_060368" description="In dbSNP:rs1036938." evidence="6 7 10">
    <original>C</original>
    <variation>S</variation>
    <location>
        <position position="26"/>
    </location>
</feature>
<feature type="sequence variant" id="VAR_036478" description="In a colorectal cancer sample; somatic mutation." evidence="8">
    <original>G</original>
    <variation>R</variation>
    <location>
        <position position="126"/>
    </location>
</feature>
<feature type="sequence variant" id="VAR_067717" description="In dbSNP:rs1130856." evidence="5 10 11">
    <original>H</original>
    <variation>Y</variation>
    <location>
        <position position="179"/>
    </location>
</feature>
<feature type="sequence conflict" description="In Ref. 7; AA sequence and 8; AA sequence." evidence="14" ref="7 8">
    <original>Q</original>
    <variation>E</variation>
    <location>
        <position position="306"/>
    </location>
</feature>
<feature type="helix" evidence="15">
    <location>
        <begin position="29"/>
        <end position="41"/>
    </location>
</feature>
<feature type="helix" evidence="15">
    <location>
        <begin position="48"/>
        <end position="69"/>
    </location>
</feature>
<feature type="strand" evidence="15">
    <location>
        <begin position="74"/>
        <end position="77"/>
    </location>
</feature>
<feature type="turn" evidence="15">
    <location>
        <begin position="81"/>
        <end position="84"/>
    </location>
</feature>
<feature type="helix" evidence="15">
    <location>
        <begin position="87"/>
        <end position="94"/>
    </location>
</feature>
<feature type="helix" evidence="15">
    <location>
        <begin position="122"/>
        <end position="125"/>
    </location>
</feature>
<feature type="strand" evidence="15">
    <location>
        <begin position="137"/>
        <end position="139"/>
    </location>
</feature>
<feature type="helix" evidence="15">
    <location>
        <begin position="141"/>
        <end position="158"/>
    </location>
</feature>
<feature type="helix" evidence="15">
    <location>
        <begin position="166"/>
        <end position="172"/>
    </location>
</feature>
<feature type="helix" evidence="15">
    <location>
        <begin position="174"/>
        <end position="176"/>
    </location>
</feature>
<feature type="helix" evidence="15">
    <location>
        <begin position="180"/>
        <end position="182"/>
    </location>
</feature>
<feature type="helix" evidence="15">
    <location>
        <begin position="186"/>
        <end position="196"/>
    </location>
</feature>
<feature type="strand" evidence="15">
    <location>
        <begin position="199"/>
        <end position="201"/>
    </location>
</feature>
<feature type="turn" evidence="15">
    <location>
        <begin position="202"/>
        <end position="204"/>
    </location>
</feature>
<feature type="helix" evidence="15">
    <location>
        <begin position="218"/>
        <end position="220"/>
    </location>
</feature>
<feature type="strand" evidence="15">
    <location>
        <begin position="221"/>
        <end position="223"/>
    </location>
</feature>
<feature type="strand" evidence="15">
    <location>
        <begin position="225"/>
        <end position="230"/>
    </location>
</feature>
<feature type="helix" evidence="15">
    <location>
        <begin position="236"/>
        <end position="245"/>
    </location>
</feature>
<feature type="strand" evidence="15">
    <location>
        <begin position="249"/>
        <end position="253"/>
    </location>
</feature>
<feature type="helix" evidence="15">
    <location>
        <begin position="257"/>
        <end position="260"/>
    </location>
</feature>
<feature type="strand" evidence="15">
    <location>
        <begin position="262"/>
        <end position="267"/>
    </location>
</feature>
<feature type="strand" evidence="15">
    <location>
        <begin position="270"/>
        <end position="272"/>
    </location>
</feature>
<feature type="helix" evidence="15">
    <location>
        <begin position="276"/>
        <end position="278"/>
    </location>
</feature>
<feature type="strand" evidence="15">
    <location>
        <begin position="281"/>
        <end position="291"/>
    </location>
</feature>
<feature type="strand" evidence="15">
    <location>
        <begin position="294"/>
        <end position="300"/>
    </location>
</feature>
<feature type="strand" evidence="15">
    <location>
        <begin position="312"/>
        <end position="316"/>
    </location>
</feature>
<feature type="helix" evidence="15">
    <location>
        <begin position="321"/>
        <end position="323"/>
    </location>
</feature>
<feature type="strand" evidence="15">
    <location>
        <begin position="329"/>
        <end position="333"/>
    </location>
</feature>